<dbReference type="EC" id="3.6.4.-"/>
<dbReference type="EMBL" id="CR382126">
    <property type="protein sequence ID" value="CAG98573.1"/>
    <property type="molecule type" value="Genomic_DNA"/>
</dbReference>
<dbReference type="RefSeq" id="XP_455865.1">
    <property type="nucleotide sequence ID" value="XM_455865.1"/>
</dbReference>
<dbReference type="PDB" id="6L8N">
    <property type="method" value="X-ray"/>
    <property type="resolution" value="3.60 A"/>
    <property type="chains" value="A=163-1114"/>
</dbReference>
<dbReference type="PDB" id="6L8O">
    <property type="method" value="X-ray"/>
    <property type="resolution" value="3.30 A"/>
    <property type="chains" value="A=163-1114"/>
</dbReference>
<dbReference type="PDBsum" id="6L8N"/>
<dbReference type="PDBsum" id="6L8O"/>
<dbReference type="SMR" id="Q6CJM4"/>
<dbReference type="FunCoup" id="Q6CJM4">
    <property type="interactions" value="1079"/>
</dbReference>
<dbReference type="STRING" id="284590.Q6CJM4"/>
<dbReference type="PaxDb" id="284590-Q6CJM4"/>
<dbReference type="KEGG" id="kla:KLLA0_F17479g"/>
<dbReference type="eggNOG" id="KOG1001">
    <property type="taxonomic scope" value="Eukaryota"/>
</dbReference>
<dbReference type="HOGENOM" id="CLU_000315_2_5_1"/>
<dbReference type="InParanoid" id="Q6CJM4"/>
<dbReference type="OMA" id="KVEPWSN"/>
<dbReference type="Proteomes" id="UP000000598">
    <property type="component" value="Chromosome F"/>
</dbReference>
<dbReference type="GO" id="GO:0005737">
    <property type="term" value="C:cytoplasm"/>
    <property type="evidence" value="ECO:0007669"/>
    <property type="project" value="UniProtKB-SubCell"/>
</dbReference>
<dbReference type="GO" id="GO:0005634">
    <property type="term" value="C:nucleus"/>
    <property type="evidence" value="ECO:0007669"/>
    <property type="project" value="UniProtKB-SubCell"/>
</dbReference>
<dbReference type="GO" id="GO:0005524">
    <property type="term" value="F:ATP binding"/>
    <property type="evidence" value="ECO:0007669"/>
    <property type="project" value="UniProtKB-KW"/>
</dbReference>
<dbReference type="GO" id="GO:0008094">
    <property type="term" value="F:ATP-dependent activity, acting on DNA"/>
    <property type="evidence" value="ECO:0007669"/>
    <property type="project" value="TreeGrafter"/>
</dbReference>
<dbReference type="GO" id="GO:0003677">
    <property type="term" value="F:DNA binding"/>
    <property type="evidence" value="ECO:0007669"/>
    <property type="project" value="UniProtKB-KW"/>
</dbReference>
<dbReference type="GO" id="GO:0004386">
    <property type="term" value="F:helicase activity"/>
    <property type="evidence" value="ECO:0007669"/>
    <property type="project" value="UniProtKB-KW"/>
</dbReference>
<dbReference type="GO" id="GO:0016818">
    <property type="term" value="F:hydrolase activity, acting on acid anhydrides, in phosphorus-containing anhydrides"/>
    <property type="evidence" value="ECO:0007669"/>
    <property type="project" value="InterPro"/>
</dbReference>
<dbReference type="GO" id="GO:0008270">
    <property type="term" value="F:zinc ion binding"/>
    <property type="evidence" value="ECO:0007669"/>
    <property type="project" value="UniProtKB-KW"/>
</dbReference>
<dbReference type="GO" id="GO:0006281">
    <property type="term" value="P:DNA repair"/>
    <property type="evidence" value="ECO:0007669"/>
    <property type="project" value="UniProtKB-KW"/>
</dbReference>
<dbReference type="CDD" id="cd18008">
    <property type="entry name" value="DEXDc_SHPRH-like"/>
    <property type="match status" value="1"/>
</dbReference>
<dbReference type="CDD" id="cd23131">
    <property type="entry name" value="RING-HC_RAD5"/>
    <property type="match status" value="1"/>
</dbReference>
<dbReference type="CDD" id="cd18793">
    <property type="entry name" value="SF2_C_SNF"/>
    <property type="match status" value="1"/>
</dbReference>
<dbReference type="Gene3D" id="3.40.50.300">
    <property type="entry name" value="P-loop containing nucleotide triphosphate hydrolases"/>
    <property type="match status" value="2"/>
</dbReference>
<dbReference type="Gene3D" id="3.40.50.10810">
    <property type="entry name" value="Tandem AAA-ATPase domain"/>
    <property type="match status" value="1"/>
</dbReference>
<dbReference type="Gene3D" id="3.30.40.10">
    <property type="entry name" value="Zinc/RING finger domain, C3HC4 (zinc finger)"/>
    <property type="match status" value="1"/>
</dbReference>
<dbReference type="InterPro" id="IPR014001">
    <property type="entry name" value="Helicase_ATP-bd"/>
</dbReference>
<dbReference type="InterPro" id="IPR001650">
    <property type="entry name" value="Helicase_C-like"/>
</dbReference>
<dbReference type="InterPro" id="IPR014905">
    <property type="entry name" value="HIRAN"/>
</dbReference>
<dbReference type="InterPro" id="IPR027417">
    <property type="entry name" value="P-loop_NTPase"/>
</dbReference>
<dbReference type="InterPro" id="IPR038718">
    <property type="entry name" value="SNF2-like_sf"/>
</dbReference>
<dbReference type="InterPro" id="IPR049730">
    <property type="entry name" value="SNF2/RAD54-like_C"/>
</dbReference>
<dbReference type="InterPro" id="IPR000330">
    <property type="entry name" value="SNF2_N"/>
</dbReference>
<dbReference type="InterPro" id="IPR050628">
    <property type="entry name" value="SNF2_RAD54_helicase_TF"/>
</dbReference>
<dbReference type="InterPro" id="IPR018957">
    <property type="entry name" value="Znf_C3HC4_RING-type"/>
</dbReference>
<dbReference type="InterPro" id="IPR001841">
    <property type="entry name" value="Znf_RING"/>
</dbReference>
<dbReference type="InterPro" id="IPR013083">
    <property type="entry name" value="Znf_RING/FYVE/PHD"/>
</dbReference>
<dbReference type="InterPro" id="IPR017907">
    <property type="entry name" value="Znf_RING_CS"/>
</dbReference>
<dbReference type="PANTHER" id="PTHR45626:SF22">
    <property type="entry name" value="DNA REPAIR PROTEIN RAD5"/>
    <property type="match status" value="1"/>
</dbReference>
<dbReference type="PANTHER" id="PTHR45626">
    <property type="entry name" value="TRANSCRIPTION TERMINATION FACTOR 2-RELATED"/>
    <property type="match status" value="1"/>
</dbReference>
<dbReference type="Pfam" id="PF00271">
    <property type="entry name" value="Helicase_C"/>
    <property type="match status" value="1"/>
</dbReference>
<dbReference type="Pfam" id="PF08797">
    <property type="entry name" value="HIRAN"/>
    <property type="match status" value="1"/>
</dbReference>
<dbReference type="Pfam" id="PF00176">
    <property type="entry name" value="SNF2-rel_dom"/>
    <property type="match status" value="1"/>
</dbReference>
<dbReference type="Pfam" id="PF00097">
    <property type="entry name" value="zf-C3HC4"/>
    <property type="match status" value="1"/>
</dbReference>
<dbReference type="SMART" id="SM00487">
    <property type="entry name" value="DEXDc"/>
    <property type="match status" value="1"/>
</dbReference>
<dbReference type="SMART" id="SM00490">
    <property type="entry name" value="HELICc"/>
    <property type="match status" value="1"/>
</dbReference>
<dbReference type="SMART" id="SM00910">
    <property type="entry name" value="HIRAN"/>
    <property type="match status" value="1"/>
</dbReference>
<dbReference type="SMART" id="SM00184">
    <property type="entry name" value="RING"/>
    <property type="match status" value="1"/>
</dbReference>
<dbReference type="SUPFAM" id="SSF52540">
    <property type="entry name" value="P-loop containing nucleoside triphosphate hydrolases"/>
    <property type="match status" value="2"/>
</dbReference>
<dbReference type="SUPFAM" id="SSF57850">
    <property type="entry name" value="RING/U-box"/>
    <property type="match status" value="1"/>
</dbReference>
<dbReference type="PROSITE" id="PS51192">
    <property type="entry name" value="HELICASE_ATP_BIND_1"/>
    <property type="match status" value="1"/>
</dbReference>
<dbReference type="PROSITE" id="PS51194">
    <property type="entry name" value="HELICASE_CTER"/>
    <property type="match status" value="1"/>
</dbReference>
<dbReference type="PROSITE" id="PS00518">
    <property type="entry name" value="ZF_RING_1"/>
    <property type="match status" value="1"/>
</dbReference>
<dbReference type="PROSITE" id="PS50089">
    <property type="entry name" value="ZF_RING_2"/>
    <property type="match status" value="1"/>
</dbReference>
<keyword id="KW-0002">3D-structure</keyword>
<keyword id="KW-0067">ATP-binding</keyword>
<keyword id="KW-0963">Cytoplasm</keyword>
<keyword id="KW-0227">DNA damage</keyword>
<keyword id="KW-0234">DNA repair</keyword>
<keyword id="KW-0238">DNA-binding</keyword>
<keyword id="KW-0347">Helicase</keyword>
<keyword id="KW-0378">Hydrolase</keyword>
<keyword id="KW-0479">Metal-binding</keyword>
<keyword id="KW-0547">Nucleotide-binding</keyword>
<keyword id="KW-0539">Nucleus</keyword>
<keyword id="KW-1185">Reference proteome</keyword>
<keyword id="KW-0862">Zinc</keyword>
<keyword id="KW-0863">Zinc-finger</keyword>
<evidence type="ECO:0000250" key="1"/>
<evidence type="ECO:0000255" key="2">
    <source>
        <dbReference type="PROSITE-ProRule" id="PRU00175"/>
    </source>
</evidence>
<evidence type="ECO:0000255" key="3">
    <source>
        <dbReference type="PROSITE-ProRule" id="PRU00541"/>
    </source>
</evidence>
<evidence type="ECO:0000255" key="4">
    <source>
        <dbReference type="PROSITE-ProRule" id="PRU00542"/>
    </source>
</evidence>
<evidence type="ECO:0000256" key="5">
    <source>
        <dbReference type="SAM" id="MobiDB-lite"/>
    </source>
</evidence>
<evidence type="ECO:0000305" key="6"/>
<evidence type="ECO:0007829" key="7">
    <source>
        <dbReference type="PDB" id="6L8O"/>
    </source>
</evidence>
<accession>Q6CJM4</accession>
<proteinExistence type="evidence at protein level"/>
<feature type="chain" id="PRO_0000056125" description="DNA repair protein RAD5">
    <location>
        <begin position="1"/>
        <end position="1114"/>
    </location>
</feature>
<feature type="domain" description="Helicase ATP-binding" evidence="3">
    <location>
        <begin position="471"/>
        <end position="676"/>
    </location>
</feature>
<feature type="domain" description="Helicase C-terminal" evidence="4">
    <location>
        <begin position="943"/>
        <end position="1114"/>
    </location>
</feature>
<feature type="zinc finger region" description="RING-type" evidence="2">
    <location>
        <begin position="858"/>
        <end position="906"/>
    </location>
</feature>
<feature type="region of interest" description="Disordered" evidence="5">
    <location>
        <begin position="25"/>
        <end position="58"/>
    </location>
</feature>
<feature type="short sequence motif" description="DEGH box">
    <location>
        <begin position="627"/>
        <end position="630"/>
    </location>
</feature>
<feature type="compositionally biased region" description="Low complexity" evidence="5">
    <location>
        <begin position="45"/>
        <end position="57"/>
    </location>
</feature>
<feature type="binding site" evidence="3">
    <location>
        <begin position="484"/>
        <end position="491"/>
    </location>
    <ligand>
        <name>ATP</name>
        <dbReference type="ChEBI" id="CHEBI:30616"/>
    </ligand>
</feature>
<feature type="strand" evidence="7">
    <location>
        <begin position="176"/>
        <end position="188"/>
    </location>
</feature>
<feature type="strand" evidence="7">
    <location>
        <begin position="203"/>
        <end position="205"/>
    </location>
</feature>
<feature type="strand" evidence="7">
    <location>
        <begin position="228"/>
        <end position="230"/>
    </location>
</feature>
<feature type="strand" evidence="7">
    <location>
        <begin position="232"/>
        <end position="234"/>
    </location>
</feature>
<feature type="strand" evidence="7">
    <location>
        <begin position="236"/>
        <end position="240"/>
    </location>
</feature>
<feature type="helix" evidence="7">
    <location>
        <begin position="243"/>
        <end position="252"/>
    </location>
</feature>
<feature type="helix" evidence="7">
    <location>
        <begin position="253"/>
        <end position="255"/>
    </location>
</feature>
<feature type="turn" evidence="7">
    <location>
        <begin position="256"/>
        <end position="258"/>
    </location>
</feature>
<feature type="strand" evidence="7">
    <location>
        <begin position="259"/>
        <end position="265"/>
    </location>
</feature>
<feature type="strand" evidence="7">
    <location>
        <begin position="278"/>
        <end position="288"/>
    </location>
</feature>
<feature type="turn" evidence="7">
    <location>
        <begin position="289"/>
        <end position="293"/>
    </location>
</feature>
<feature type="helix" evidence="7">
    <location>
        <begin position="312"/>
        <end position="329"/>
    </location>
</feature>
<feature type="strand" evidence="7">
    <location>
        <begin position="337"/>
        <end position="339"/>
    </location>
</feature>
<feature type="helix" evidence="7">
    <location>
        <begin position="363"/>
        <end position="373"/>
    </location>
</feature>
<feature type="turn" evidence="7">
    <location>
        <begin position="389"/>
        <end position="391"/>
    </location>
</feature>
<feature type="helix" evidence="7">
    <location>
        <begin position="398"/>
        <end position="410"/>
    </location>
</feature>
<feature type="helix" evidence="7">
    <location>
        <begin position="414"/>
        <end position="416"/>
    </location>
</feature>
<feature type="strand" evidence="7">
    <location>
        <begin position="436"/>
        <end position="439"/>
    </location>
</feature>
<feature type="strand" evidence="7">
    <location>
        <begin position="456"/>
        <end position="459"/>
    </location>
</feature>
<feature type="turn" evidence="7">
    <location>
        <begin position="461"/>
        <end position="463"/>
    </location>
</feature>
<feature type="strand" evidence="7">
    <location>
        <begin position="466"/>
        <end position="469"/>
    </location>
</feature>
<feature type="strand" evidence="7">
    <location>
        <begin position="477"/>
        <end position="484"/>
    </location>
</feature>
<feature type="helix" evidence="7">
    <location>
        <begin position="490"/>
        <end position="500"/>
    </location>
</feature>
<feature type="helix" evidence="7">
    <location>
        <begin position="505"/>
        <end position="513"/>
    </location>
</feature>
<feature type="strand" evidence="7">
    <location>
        <begin position="546"/>
        <end position="550"/>
    </location>
</feature>
<feature type="helix" evidence="7">
    <location>
        <begin position="552"/>
        <end position="554"/>
    </location>
</feature>
<feature type="helix" evidence="7">
    <location>
        <begin position="555"/>
        <end position="565"/>
    </location>
</feature>
<feature type="strand" evidence="7">
    <location>
        <begin position="573"/>
        <end position="575"/>
    </location>
</feature>
<feature type="helix" evidence="7">
    <location>
        <begin position="584"/>
        <end position="589"/>
    </location>
</feature>
<feature type="strand" evidence="7">
    <location>
        <begin position="595"/>
        <end position="600"/>
    </location>
</feature>
<feature type="helix" evidence="7">
    <location>
        <begin position="601"/>
        <end position="609"/>
    </location>
</feature>
<feature type="strand" evidence="7">
    <location>
        <begin position="615"/>
        <end position="627"/>
    </location>
</feature>
<feature type="helix" evidence="7">
    <location>
        <begin position="629"/>
        <end position="633"/>
    </location>
</feature>
<feature type="helix" evidence="7">
    <location>
        <begin position="638"/>
        <end position="645"/>
    </location>
</feature>
<feature type="strand" evidence="7">
    <location>
        <begin position="648"/>
        <end position="654"/>
    </location>
</feature>
<feature type="strand" evidence="7">
    <location>
        <begin position="660"/>
        <end position="662"/>
    </location>
</feature>
<feature type="helix" evidence="7">
    <location>
        <begin position="665"/>
        <end position="673"/>
    </location>
</feature>
<feature type="turn" evidence="7">
    <location>
        <begin position="676"/>
        <end position="679"/>
    </location>
</feature>
<feature type="helix" evidence="7">
    <location>
        <begin position="681"/>
        <end position="687"/>
    </location>
</feature>
<feature type="helix" evidence="7">
    <location>
        <begin position="689"/>
        <end position="693"/>
    </location>
</feature>
<feature type="helix" evidence="7">
    <location>
        <begin position="697"/>
        <end position="708"/>
    </location>
</feature>
<feature type="turn" evidence="7">
    <location>
        <begin position="709"/>
        <end position="711"/>
    </location>
</feature>
<feature type="strand" evidence="7">
    <location>
        <begin position="712"/>
        <end position="715"/>
    </location>
</feature>
<feature type="strand" evidence="7">
    <location>
        <begin position="722"/>
        <end position="724"/>
    </location>
</feature>
<feature type="strand" evidence="7">
    <location>
        <begin position="726"/>
        <end position="728"/>
    </location>
</feature>
<feature type="strand" evidence="7">
    <location>
        <begin position="732"/>
        <end position="740"/>
    </location>
</feature>
<feature type="helix" evidence="7">
    <location>
        <begin position="744"/>
        <end position="766"/>
    </location>
</feature>
<feature type="helix" evidence="7">
    <location>
        <begin position="770"/>
        <end position="773"/>
    </location>
</feature>
<feature type="helix" evidence="7">
    <location>
        <begin position="774"/>
        <end position="789"/>
    </location>
</feature>
<feature type="helix" evidence="7">
    <location>
        <begin position="791"/>
        <end position="793"/>
    </location>
</feature>
<feature type="helix" evidence="7">
    <location>
        <begin position="833"/>
        <end position="846"/>
    </location>
</feature>
<feature type="turn" evidence="7">
    <location>
        <begin position="859"/>
        <end position="861"/>
    </location>
</feature>
<feature type="helix" evidence="7">
    <location>
        <begin position="869"/>
        <end position="871"/>
    </location>
</feature>
<feature type="strand" evidence="7">
    <location>
        <begin position="872"/>
        <end position="874"/>
    </location>
</feature>
<feature type="strand" evidence="7">
    <location>
        <begin position="880"/>
        <end position="882"/>
    </location>
</feature>
<feature type="helix" evidence="7">
    <location>
        <begin position="883"/>
        <end position="894"/>
    </location>
</feature>
<feature type="turn" evidence="7">
    <location>
        <begin position="895"/>
        <end position="897"/>
    </location>
</feature>
<feature type="turn" evidence="7">
    <location>
        <begin position="903"/>
        <end position="905"/>
    </location>
</feature>
<feature type="helix" evidence="7">
    <location>
        <begin position="911"/>
        <end position="913"/>
    </location>
</feature>
<feature type="strand" evidence="7">
    <location>
        <begin position="915"/>
        <end position="917"/>
    </location>
</feature>
<feature type="turn" evidence="7">
    <location>
        <begin position="923"/>
        <end position="925"/>
    </location>
</feature>
<feature type="strand" evidence="7">
    <location>
        <begin position="929"/>
        <end position="933"/>
    </location>
</feature>
<feature type="helix" evidence="7">
    <location>
        <begin position="939"/>
        <end position="954"/>
    </location>
</feature>
<feature type="strand" evidence="7">
    <location>
        <begin position="959"/>
        <end position="965"/>
    </location>
</feature>
<feature type="helix" evidence="7">
    <location>
        <begin position="967"/>
        <end position="980"/>
    </location>
</feature>
<feature type="turn" evidence="7">
    <location>
        <begin position="983"/>
        <end position="985"/>
    </location>
</feature>
<feature type="strand" evidence="7">
    <location>
        <begin position="986"/>
        <end position="990"/>
    </location>
</feature>
<feature type="strand" evidence="7">
    <location>
        <begin position="993"/>
        <end position="995"/>
    </location>
</feature>
<feature type="helix" evidence="7">
    <location>
        <begin position="997"/>
        <end position="1007"/>
    </location>
</feature>
<feature type="strand" evidence="7">
    <location>
        <begin position="1014"/>
        <end position="1021"/>
    </location>
</feature>
<feature type="turn" evidence="7">
    <location>
        <begin position="1022"/>
        <end position="1028"/>
    </location>
</feature>
<feature type="strand" evidence="7">
    <location>
        <begin position="1034"/>
        <end position="1039"/>
    </location>
</feature>
<feature type="helix" evidence="7">
    <location>
        <begin position="1046"/>
        <end position="1054"/>
    </location>
</feature>
<feature type="strand" evidence="7">
    <location>
        <begin position="1065"/>
        <end position="1072"/>
    </location>
</feature>
<feature type="helix" evidence="7">
    <location>
        <begin position="1076"/>
        <end position="1090"/>
    </location>
</feature>
<feature type="helix" evidence="7">
    <location>
        <begin position="1098"/>
        <end position="1113"/>
    </location>
</feature>
<reference key="1">
    <citation type="journal article" date="2004" name="Nature">
        <title>Genome evolution in yeasts.</title>
        <authorList>
            <person name="Dujon B."/>
            <person name="Sherman D."/>
            <person name="Fischer G."/>
            <person name="Durrens P."/>
            <person name="Casaregola S."/>
            <person name="Lafontaine I."/>
            <person name="de Montigny J."/>
            <person name="Marck C."/>
            <person name="Neuveglise C."/>
            <person name="Talla E."/>
            <person name="Goffard N."/>
            <person name="Frangeul L."/>
            <person name="Aigle M."/>
            <person name="Anthouard V."/>
            <person name="Babour A."/>
            <person name="Barbe V."/>
            <person name="Barnay S."/>
            <person name="Blanchin S."/>
            <person name="Beckerich J.-M."/>
            <person name="Beyne E."/>
            <person name="Bleykasten C."/>
            <person name="Boisrame A."/>
            <person name="Boyer J."/>
            <person name="Cattolico L."/>
            <person name="Confanioleri F."/>
            <person name="de Daruvar A."/>
            <person name="Despons L."/>
            <person name="Fabre E."/>
            <person name="Fairhead C."/>
            <person name="Ferry-Dumazet H."/>
            <person name="Groppi A."/>
            <person name="Hantraye F."/>
            <person name="Hennequin C."/>
            <person name="Jauniaux N."/>
            <person name="Joyet P."/>
            <person name="Kachouri R."/>
            <person name="Kerrest A."/>
            <person name="Koszul R."/>
            <person name="Lemaire M."/>
            <person name="Lesur I."/>
            <person name="Ma L."/>
            <person name="Muller H."/>
            <person name="Nicaud J.-M."/>
            <person name="Nikolski M."/>
            <person name="Oztas S."/>
            <person name="Ozier-Kalogeropoulos O."/>
            <person name="Pellenz S."/>
            <person name="Potier S."/>
            <person name="Richard G.-F."/>
            <person name="Straub M.-L."/>
            <person name="Suleau A."/>
            <person name="Swennen D."/>
            <person name="Tekaia F."/>
            <person name="Wesolowski-Louvel M."/>
            <person name="Westhof E."/>
            <person name="Wirth B."/>
            <person name="Zeniou-Meyer M."/>
            <person name="Zivanovic Y."/>
            <person name="Bolotin-Fukuhara M."/>
            <person name="Thierry A."/>
            <person name="Bouchier C."/>
            <person name="Caudron B."/>
            <person name="Scarpelli C."/>
            <person name="Gaillardin C."/>
            <person name="Weissenbach J."/>
            <person name="Wincker P."/>
            <person name="Souciet J.-L."/>
        </authorList>
    </citation>
    <scope>NUCLEOTIDE SEQUENCE [LARGE SCALE GENOMIC DNA]</scope>
    <source>
        <strain>ATCC 8585 / CBS 2359 / DSM 70799 / NBRC 1267 / NRRL Y-1140 / WM37</strain>
    </source>
</reference>
<protein>
    <recommendedName>
        <fullName>DNA repair protein RAD5</fullName>
        <ecNumber>3.6.4.-</ecNumber>
    </recommendedName>
</protein>
<organism>
    <name type="scientific">Kluyveromyces lactis (strain ATCC 8585 / CBS 2359 / DSM 70799 / NBRC 1267 / NRRL Y-1140 / WM37)</name>
    <name type="common">Yeast</name>
    <name type="synonym">Candida sphaerica</name>
    <dbReference type="NCBI Taxonomy" id="284590"/>
    <lineage>
        <taxon>Eukaryota</taxon>
        <taxon>Fungi</taxon>
        <taxon>Dikarya</taxon>
        <taxon>Ascomycota</taxon>
        <taxon>Saccharomycotina</taxon>
        <taxon>Saccharomycetes</taxon>
        <taxon>Saccharomycetales</taxon>
        <taxon>Saccharomycetaceae</taxon>
        <taxon>Kluyveromyces</taxon>
    </lineage>
</organism>
<name>RAD5_KLULA</name>
<gene>
    <name type="primary">RAD5</name>
    <name type="ordered locus">KLLA0F17479g</name>
</gene>
<comment type="function">
    <text evidence="1">Probable helicase, member of the UBC2/RAD6 epistasis group. Functions with DNA repair protein RAD18 in error-free postreplication DNA repair. Involved in the maintenance of wild-type rates of instability of simple repetitive sequences such as poly(GT) repeats. Seems to be involved in maintaining a balance which acts in favor of error-prone non-homologous joining during DNA double-strand breaks repairs (By similarity).</text>
</comment>
<comment type="subcellular location">
    <subcellularLocation>
        <location evidence="1">Cytoplasm</location>
    </subcellularLocation>
    <subcellularLocation>
        <location evidence="1">Nucleus</location>
    </subcellularLocation>
</comment>
<comment type="similarity">
    <text evidence="6">Belongs to the SNF2/RAD54 helicase family.</text>
</comment>
<sequence length="1114" mass="127147">MTQPQKADEKPRFFRDEDESVINLNESRSLFVQDEADDSDDGQGHVESSSEVSSNTSNHKERFFESLKEILGENMISSSQLHTLWSSYGLLKDGISIAADKFFEDKELLSKSKTESKMPAGDNIEVIDLSDEENDDELSILPSSSQLSQLFTNKRTSTQAGLESPMSSDKGRNRWSRYIGSIHTMGFATRPTVKPVPIGSRLGFKKSVPKDLPLGKSLQHQHCSHLVRLIDTSQDRELGRMPEDVARILYPLLDYSEQVSLEPYLLINNGKRFSVGDNIYIRIDCYLTSQAFVRIEGGSILNKSFINDHGMDTRQLHRAGAIMALFDAINIQPVYGDTKNEMIPNYQENTVSSSQFQDEALNINQLKSFYRITQSAASLQNLPETTPDESLFKLQLRRYQKQSLSWMLKREYEYSHLSEKAAEVSIDGNSMNPLWKKFRWPSNSKQGTPNHEDDCFFYANLYTGEFSIEKPVIKTIINGGILADEMGLGKTISALALICTASYDEAHEKKIESTKKPSMKEMSSQVDSSPLRHSQHKHDTYAYRTTLIVVPMSLLNQWQSEFEKANKDLKKRCEIYYGNNIKDLRAYVLGPNAPSVIITTYGIIQSEYGRTSTSGLFNVVFFRIILDEGHTIRNRSTRTSKAVIALRSSRKWILTGTPIINRLDDLFSLVQFLNLEPWSHINYWKRYVSVPFEKGNYAQAFDVINAVLEPVLLRRTKNMKDVDGKPLVSLPPKEVIVEKLQLSSSEKRVYQSMLEDAENSVKEGLAKGDLLKNYTNILVHILRLRQVCCHLDLLKKTPDLGDPDLEDLENSTQNISSILMPKNIKSPKSSISQDKLDALSANFRDIHSASEQLPSFECAICTTECIEPLSAVSITECLHTFCEPCLAEYIEFQQNKKLSINCPYCRMPISEANVLKLKEPIDAERGYELISFHSHFQSTKIKALLRHLKQIQETSPGEQIIVFSQFSSFLDILEIELRSHLPRDQVIIYKFDGRLDMKERTRILEQFHDKDLSCIKLLLLSLKTGGVGLNLTCASRAFMMDPWWSPGMEDQAIDRIHRIGQQQTVKVVRFIIDNSVEEKMLRIQERKRMLGDIVEGDEAERRQKRIEEIQMLFQ</sequence>